<organism>
    <name type="scientific">Burkholderia pseudomallei (strain K96243)</name>
    <dbReference type="NCBI Taxonomy" id="272560"/>
    <lineage>
        <taxon>Bacteria</taxon>
        <taxon>Pseudomonadati</taxon>
        <taxon>Pseudomonadota</taxon>
        <taxon>Betaproteobacteria</taxon>
        <taxon>Burkholderiales</taxon>
        <taxon>Burkholderiaceae</taxon>
        <taxon>Burkholderia</taxon>
        <taxon>pseudomallei group</taxon>
    </lineage>
</organism>
<protein>
    <recommendedName>
        <fullName>Translocator protein BipD</fullName>
    </recommendedName>
</protein>
<keyword id="KW-0002">3D-structure</keyword>
<keyword id="KW-0175">Coiled coil</keyword>
<keyword id="KW-1185">Reference proteome</keyword>
<keyword id="KW-0964">Secreted</keyword>
<keyword id="KW-0843">Virulence</keyword>
<dbReference type="EMBL" id="EF120623">
    <property type="protein sequence ID" value="ABL67521.1"/>
    <property type="molecule type" value="Genomic_DNA"/>
</dbReference>
<dbReference type="EMBL" id="BX571966">
    <property type="protein sequence ID" value="CAH39002.1"/>
    <property type="molecule type" value="Genomic_DNA"/>
</dbReference>
<dbReference type="RefSeq" id="WP_004188590.1">
    <property type="nucleotide sequence ID" value="NZ_CP009537.1"/>
</dbReference>
<dbReference type="RefSeq" id="YP_111535.1">
    <property type="nucleotide sequence ID" value="NC_006351.1"/>
</dbReference>
<dbReference type="PDB" id="2IXR">
    <property type="method" value="X-ray"/>
    <property type="resolution" value="2.60 A"/>
    <property type="chains" value="A=10-310"/>
</dbReference>
<dbReference type="PDB" id="2IZP">
    <property type="method" value="X-ray"/>
    <property type="resolution" value="2.10 A"/>
    <property type="chains" value="A/B=8-310"/>
</dbReference>
<dbReference type="PDB" id="2J9T">
    <property type="method" value="X-ray"/>
    <property type="resolution" value="2.70 A"/>
    <property type="chains" value="A/B=10-310"/>
</dbReference>
<dbReference type="PDB" id="3NFT">
    <property type="method" value="X-ray"/>
    <property type="resolution" value="1.51 A"/>
    <property type="chains" value="A=10-310"/>
</dbReference>
<dbReference type="PDBsum" id="2IXR"/>
<dbReference type="PDBsum" id="2IZP"/>
<dbReference type="PDBsum" id="2J9T"/>
<dbReference type="PDBsum" id="3NFT"/>
<dbReference type="SMR" id="Q63K37"/>
<dbReference type="STRING" id="272560.BPSS1529"/>
<dbReference type="GeneID" id="93063709"/>
<dbReference type="KEGG" id="bps:BPSS1529"/>
<dbReference type="PATRIC" id="fig|272560.51.peg.4884"/>
<dbReference type="eggNOG" id="ENOG5032RHE">
    <property type="taxonomic scope" value="Bacteria"/>
</dbReference>
<dbReference type="EvolutionaryTrace" id="Q63K37"/>
<dbReference type="Proteomes" id="UP000000605">
    <property type="component" value="Chromosome 2"/>
</dbReference>
<dbReference type="GO" id="GO:0005576">
    <property type="term" value="C:extracellular region"/>
    <property type="evidence" value="ECO:0007669"/>
    <property type="project" value="UniProtKB-SubCell"/>
</dbReference>
<dbReference type="Gene3D" id="1.20.1710.10">
    <property type="entry name" value="IpaD-like"/>
    <property type="match status" value="1"/>
</dbReference>
<dbReference type="InterPro" id="IPR036708">
    <property type="entry name" value="BipD-like_sf"/>
</dbReference>
<dbReference type="InterPro" id="IPR009483">
    <property type="entry name" value="IpaD/BipD/SipD"/>
</dbReference>
<dbReference type="NCBIfam" id="TIGR02553">
    <property type="entry name" value="SipD_IpaD_SspD"/>
    <property type="match status" value="1"/>
</dbReference>
<dbReference type="Pfam" id="PF06511">
    <property type="entry name" value="T3SS_TC"/>
    <property type="match status" value="1"/>
</dbReference>
<dbReference type="SUPFAM" id="SSF140693">
    <property type="entry name" value="IpaD-like"/>
    <property type="match status" value="1"/>
</dbReference>
<sequence length="310" mass="33975">MNMHVDMGRALTVRDWPALEALAKTMPADAGARAMTDDDLRAAGVDRRVPEQKLGAAIDEFASLRLPDRIDGRFVDGRRANLTVFDDARVAVRGHARAQRNLLERLETELLGGTLDTAGDEGGIQPDPILQGLVDVIGQGKSDIDAYATIVEGLTKYFQSVADVMSKLQDYISAKDDKNMKIDGGKIKALIQQVIDHLPTMQLPKGADIARWRKELGDAVSISDSGVVTINPDKLIKMRDSLPPDGTVWDTARYQAWNTAFSGQKDNIQNDVQTLVEKYSHQNSNFDNLVKVLSGAISTLTDTAKSYLQI</sequence>
<feature type="chain" id="PRO_0000344009" description="Translocator protein BipD">
    <location>
        <begin position="1"/>
        <end position="310"/>
    </location>
</feature>
<feature type="coiled-coil region" evidence="1">
    <location>
        <begin position="127"/>
        <end position="171"/>
    </location>
</feature>
<feature type="coiled-coil region" evidence="1">
    <location>
        <begin position="250"/>
        <end position="299"/>
    </location>
</feature>
<feature type="sequence conflict" description="In Ref. 1; ABL67521." evidence="5" ref="1">
    <original>A</original>
    <variation>E</variation>
    <location>
        <position position="34"/>
    </location>
</feature>
<feature type="sequence conflict" description="In Ref. 1; ABL67521." evidence="5" ref="1">
    <original>V</original>
    <variation>M</variation>
    <location>
        <position position="292"/>
    </location>
</feature>
<feature type="sequence conflict" description="In Ref. 1; ABL67521." evidence="5" ref="1">
    <original>T</original>
    <variation>A</variation>
    <location>
        <position position="303"/>
    </location>
</feature>
<feature type="helix" evidence="7">
    <location>
        <begin position="37"/>
        <end position="42"/>
    </location>
</feature>
<feature type="helix" evidence="7">
    <location>
        <begin position="48"/>
        <end position="63"/>
    </location>
</feature>
<feature type="strand" evidence="7">
    <location>
        <begin position="68"/>
        <end position="70"/>
    </location>
</feature>
<feature type="strand" evidence="7">
    <location>
        <begin position="73"/>
        <end position="75"/>
    </location>
</feature>
<feature type="helix" evidence="7">
    <location>
        <begin position="83"/>
        <end position="110"/>
    </location>
</feature>
<feature type="strand" evidence="6">
    <location>
        <begin position="122"/>
        <end position="125"/>
    </location>
</feature>
<feature type="helix" evidence="7">
    <location>
        <begin position="128"/>
        <end position="167"/>
    </location>
</feature>
<feature type="helix" evidence="7">
    <location>
        <begin position="168"/>
        <end position="171"/>
    </location>
</feature>
<feature type="strand" evidence="7">
    <location>
        <begin position="172"/>
        <end position="175"/>
    </location>
</feature>
<feature type="turn" evidence="7">
    <location>
        <begin position="176"/>
        <end position="178"/>
    </location>
</feature>
<feature type="strand" evidence="7">
    <location>
        <begin position="179"/>
        <end position="182"/>
    </location>
</feature>
<feature type="helix" evidence="7">
    <location>
        <begin position="184"/>
        <end position="196"/>
    </location>
</feature>
<feature type="strand" evidence="7">
    <location>
        <begin position="200"/>
        <end position="202"/>
    </location>
</feature>
<feature type="helix" evidence="7">
    <location>
        <begin position="209"/>
        <end position="216"/>
    </location>
</feature>
<feature type="strand" evidence="7">
    <location>
        <begin position="220"/>
        <end position="222"/>
    </location>
</feature>
<feature type="strand" evidence="7">
    <location>
        <begin position="227"/>
        <end position="230"/>
    </location>
</feature>
<feature type="helix" evidence="7">
    <location>
        <begin position="233"/>
        <end position="240"/>
    </location>
</feature>
<feature type="strand" evidence="7">
    <location>
        <begin position="247"/>
        <end position="250"/>
    </location>
</feature>
<feature type="helix" evidence="7">
    <location>
        <begin position="251"/>
        <end position="302"/>
    </location>
</feature>
<reference key="1">
    <citation type="submission" date="2006-11" db="EMBL/GenBank/DDBJ databases">
        <authorList>
            <person name="Chotigeat W."/>
            <person name="Visutthi M."/>
            <person name="Jitsurong S."/>
        </authorList>
    </citation>
    <scope>NUCLEOTIDE SEQUENCE [GENOMIC DNA]</scope>
</reference>
<reference key="2">
    <citation type="journal article" date="2004" name="Proc. Natl. Acad. Sci. U.S.A.">
        <title>Genomic plasticity of the causative agent of melioidosis, Burkholderia pseudomallei.</title>
        <authorList>
            <person name="Holden M.T.G."/>
            <person name="Titball R.W."/>
            <person name="Peacock S.J."/>
            <person name="Cerdeno-Tarraga A.-M."/>
            <person name="Atkins T."/>
            <person name="Crossman L.C."/>
            <person name="Pitt T."/>
            <person name="Churcher C."/>
            <person name="Mungall K.L."/>
            <person name="Bentley S.D."/>
            <person name="Sebaihia M."/>
            <person name="Thomson N.R."/>
            <person name="Bason N."/>
            <person name="Beacham I.R."/>
            <person name="Brooks K."/>
            <person name="Brown K.A."/>
            <person name="Brown N.F."/>
            <person name="Challis G.L."/>
            <person name="Cherevach I."/>
            <person name="Chillingworth T."/>
            <person name="Cronin A."/>
            <person name="Crossett B."/>
            <person name="Davis P."/>
            <person name="DeShazer D."/>
            <person name="Feltwell T."/>
            <person name="Fraser A."/>
            <person name="Hance Z."/>
            <person name="Hauser H."/>
            <person name="Holroyd S."/>
            <person name="Jagels K."/>
            <person name="Keith K.E."/>
            <person name="Maddison M."/>
            <person name="Moule S."/>
            <person name="Price C."/>
            <person name="Quail M.A."/>
            <person name="Rabbinowitsch E."/>
            <person name="Rutherford K."/>
            <person name="Sanders M."/>
            <person name="Simmonds M."/>
            <person name="Songsivilai S."/>
            <person name="Stevens K."/>
            <person name="Tumapa S."/>
            <person name="Vesaratchavest M."/>
            <person name="Whitehead S."/>
            <person name="Yeats C."/>
            <person name="Barrell B.G."/>
            <person name="Oyston P.C.F."/>
            <person name="Parkhill J."/>
        </authorList>
    </citation>
    <scope>NUCLEOTIDE SEQUENCE [LARGE SCALE GENOMIC DNA]</scope>
    <source>
        <strain>K96243</strain>
    </source>
</reference>
<reference key="3">
    <citation type="journal article" date="2002" name="Mol. Microbiol.">
        <title>An Inv/Mxi-Spa-like type III protein secretion system in Burkholderia pseudomallei modulates intracellular behaviour of the pathogen.</title>
        <authorList>
            <person name="Stevens M.P."/>
            <person name="Wood M.W."/>
            <person name="Taylor L.A."/>
            <person name="Monaghan P."/>
            <person name="Hawes P."/>
            <person name="Jones P.W."/>
            <person name="Wallis T.S."/>
            <person name="Galyov E.E."/>
        </authorList>
    </citation>
    <scope>ROLE IN LYSIS OF HOST VACUOLES</scope>
    <source>
        <strain>10276</strain>
    </source>
</reference>
<reference key="4">
    <citation type="journal article" date="2004" name="Microbiology">
        <title>Attenuated virulence and protective efficacy of a Burkholderia pseudomallei bsa type III secretion mutant in murine models of melioidosis.</title>
        <authorList>
            <person name="Stevens M.P."/>
            <person name="Haque A."/>
            <person name="Atkins T."/>
            <person name="Hill J."/>
            <person name="Wood M.W."/>
            <person name="Easton A."/>
            <person name="Nelson M."/>
            <person name="Underwood-Fowler C."/>
            <person name="Titball R.W."/>
            <person name="Bancroft G.J."/>
            <person name="Galyov E.E."/>
        </authorList>
    </citation>
    <scope>ROLE IN VIRULENCE</scope>
    <scope>SUBCELLULAR LOCATION</scope>
    <source>
        <strain>576</strain>
    </source>
</reference>
<reference key="5">
    <citation type="journal article" date="2006" name="J. Infect. Dis.">
        <title>A live experimental vaccine against Burkholderia pseudomallei elicits CD4+ T cell-mediated immunity, priming T cells specific for 2 type III secretion system proteins.</title>
        <authorList>
            <person name="Haque A."/>
            <person name="Chu K."/>
            <person name="Easton A."/>
            <person name="Stevens M.P."/>
            <person name="Galyov E.E."/>
            <person name="Atkins T."/>
            <person name="Titball R."/>
            <person name="Bancroft G.J."/>
        </authorList>
    </citation>
    <scope>IMMUNOGENICITY</scope>
    <source>
        <strain>576</strain>
    </source>
</reference>
<reference key="6">
    <citation type="journal article" date="2008" name="FEMS Immunol. Med. Microbiol.">
        <title>Evaluating Burkholderia pseudomallei Bip proteins as vaccines and Bip antibodies as detection agents.</title>
        <authorList>
            <person name="Druar C."/>
            <person name="Yu F."/>
            <person name="Barnes J.L."/>
            <person name="Okinaka R.T."/>
            <person name="Chantratita N."/>
            <person name="Beg S."/>
            <person name="Stratilo C.W."/>
            <person name="Olive A.J."/>
            <person name="Soltes G."/>
            <person name="Russell M.L."/>
            <person name="Limmathurotsakul D."/>
            <person name="Norton R.E."/>
            <person name="Ni S.X."/>
            <person name="Picking W.D."/>
            <person name="Jackson P.J."/>
            <person name="Stewart D.I.H."/>
            <person name="Tsvetnitsky V."/>
            <person name="Picking W.L."/>
            <person name="Cherwonogrodzky J.W."/>
            <person name="Ketheesan N."/>
            <person name="Peacock S.J."/>
            <person name="Wiersma E.J."/>
        </authorList>
    </citation>
    <scope>IMMUNOGENICITY</scope>
</reference>
<reference key="7">
    <citation type="journal article" date="2006" name="J. Mol. Biol.">
        <title>High resolution structure of BipD: an invasion protein associated with the type III secretion system of Burkholderia pseudomallei.</title>
        <authorList>
            <person name="Erskine P.T."/>
            <person name="Knight M.J."/>
            <person name="Ruaux A."/>
            <person name="Mikolajek H."/>
            <person name="Wong Fat Sang N."/>
            <person name="Withers J."/>
            <person name="Gill R."/>
            <person name="Wood S.P."/>
            <person name="Wood M."/>
            <person name="Fox G.C."/>
            <person name="Cooper J.B."/>
        </authorList>
    </citation>
    <scope>X-RAY CRYSTALLOGRAPHY (2.1 ANGSTROMS) OF 8-310</scope>
</reference>
<reference key="8">
    <citation type="journal article" date="2007" name="J. Biol. Chem.">
        <title>Self-chaperoning of the type III secretion system needle tip proteins IpaD and BipD.</title>
        <authorList>
            <person name="Johnson S."/>
            <person name="Roversi P."/>
            <person name="Espina M."/>
            <person name="Olive A."/>
            <person name="Deane J.E."/>
            <person name="Birket S."/>
            <person name="Field T."/>
            <person name="Picking W.D."/>
            <person name="Blocker A.J."/>
            <person name="Galyov E.E."/>
            <person name="Picking W.L."/>
            <person name="Lea S.M."/>
        </authorList>
    </citation>
    <scope>X-RAY CRYSTALLOGRAPHY (2.6 ANGSTROMS) OF 8-310</scope>
    <scope>SUBCELLULAR LOCATION</scope>
</reference>
<accession>Q63K37</accession>
<accession>A1EC20</accession>
<proteinExistence type="evidence at protein level"/>
<gene>
    <name type="primary">bipD</name>
    <name type="ordered locus">BPSS1529</name>
</gene>
<evidence type="ECO:0000255" key="1"/>
<evidence type="ECO:0000269" key="2">
    <source>
    </source>
</evidence>
<evidence type="ECO:0000269" key="3">
    <source>
    </source>
</evidence>
<evidence type="ECO:0000269" key="4">
    <source>
    </source>
</evidence>
<evidence type="ECO:0000305" key="5"/>
<evidence type="ECO:0007829" key="6">
    <source>
        <dbReference type="PDB" id="2IZP"/>
    </source>
</evidence>
<evidence type="ECO:0007829" key="7">
    <source>
        <dbReference type="PDB" id="3NFT"/>
    </source>
</evidence>
<name>BIPD_BURPS</name>
<comment type="function">
    <text evidence="2 3">Required for invasion of epithelial cells, as well as for survival within host cells, escape from endocytic vesicles and subsequent actin-tail formation. Probably regulates the secretion of effectors BipB and BipC and their final integration into the target cell membrane.</text>
</comment>
<comment type="subcellular location">
    <subcellularLocation>
        <location evidence="3 4">Secreted</location>
    </subcellularLocation>
    <text>Secreted via the bsa type III secretion system. Localizes to the tip of the external secretion needle that is part of the secretion apparatus.</text>
</comment>
<comment type="domain">
    <text>The N-terminal domain is an intra-molecular chaperone that prevents premature oligomerization of the residues on the coiled-coil region that are involved in interactions with the needle and/or itself. The residues in the C-terminal domain probably form oligomeric structures at the tip of the needle that are responsible for the regulation of secretion of other effectors.</text>
</comment>
<comment type="miscellaneous">
    <text>Human meliodoisis patients have detectable antibody response to BipD. However, BipD does not act as a protective antigen.</text>
</comment>
<comment type="similarity">
    <text evidence="5">Belongs to the invasin protein D family.</text>
</comment>